<dbReference type="EMBL" id="L77117">
    <property type="protein sequence ID" value="AAB98808.1"/>
    <property type="molecule type" value="Genomic_DNA"/>
</dbReference>
<dbReference type="PIR" id="H64400">
    <property type="entry name" value="H64400"/>
</dbReference>
<dbReference type="RefSeq" id="WP_010870318.1">
    <property type="nucleotide sequence ID" value="NC_000909.1"/>
</dbReference>
<dbReference type="SMR" id="Q58218"/>
<dbReference type="STRING" id="243232.MJ_0808"/>
<dbReference type="PaxDb" id="243232-MJ_0808"/>
<dbReference type="DNASU" id="1451690"/>
<dbReference type="EnsemblBacteria" id="AAB98808">
    <property type="protein sequence ID" value="AAB98808"/>
    <property type="gene ID" value="MJ_0808"/>
</dbReference>
<dbReference type="GeneID" id="1451690"/>
<dbReference type="KEGG" id="mja:MJ_0808"/>
<dbReference type="eggNOG" id="arCOG00946">
    <property type="taxonomic scope" value="Archaea"/>
</dbReference>
<dbReference type="HOGENOM" id="CLU_044176_1_0_2"/>
<dbReference type="InParanoid" id="Q58218"/>
<dbReference type="OrthoDB" id="5682at2157"/>
<dbReference type="PhylomeDB" id="Q58218"/>
<dbReference type="Proteomes" id="UP000000805">
    <property type="component" value="Chromosome"/>
</dbReference>
<dbReference type="GO" id="GO:0051539">
    <property type="term" value="F:4 iron, 4 sulfur cluster binding"/>
    <property type="evidence" value="ECO:0007669"/>
    <property type="project" value="UniProtKB-KW"/>
</dbReference>
<dbReference type="GO" id="GO:0003824">
    <property type="term" value="F:catalytic activity"/>
    <property type="evidence" value="ECO:0007669"/>
    <property type="project" value="InterPro"/>
</dbReference>
<dbReference type="GO" id="GO:0046872">
    <property type="term" value="F:metal ion binding"/>
    <property type="evidence" value="ECO:0007669"/>
    <property type="project" value="UniProtKB-KW"/>
</dbReference>
<dbReference type="CDD" id="cd01335">
    <property type="entry name" value="Radical_SAM"/>
    <property type="match status" value="1"/>
</dbReference>
<dbReference type="Gene3D" id="3.20.20.70">
    <property type="entry name" value="Aldolase class I"/>
    <property type="match status" value="1"/>
</dbReference>
<dbReference type="InterPro" id="IPR013785">
    <property type="entry name" value="Aldolase_TIM"/>
</dbReference>
<dbReference type="InterPro" id="IPR027596">
    <property type="entry name" value="AmmeMemoSam_rS"/>
</dbReference>
<dbReference type="InterPro" id="IPR034457">
    <property type="entry name" value="Organic_radical-activating"/>
</dbReference>
<dbReference type="InterPro" id="IPR016431">
    <property type="entry name" value="Pyrv-formate_lyase-activ_prd"/>
</dbReference>
<dbReference type="InterPro" id="IPR007197">
    <property type="entry name" value="rSAM"/>
</dbReference>
<dbReference type="NCBIfam" id="TIGR04337">
    <property type="entry name" value="AmmeMemoSam_rS"/>
    <property type="match status" value="1"/>
</dbReference>
<dbReference type="PANTHER" id="PTHR30352:SF5">
    <property type="entry name" value="PYRUVATE FORMATE-LYASE 1-ACTIVATING ENZYME"/>
    <property type="match status" value="1"/>
</dbReference>
<dbReference type="PANTHER" id="PTHR30352">
    <property type="entry name" value="PYRUVATE FORMATE-LYASE-ACTIVATING ENZYME"/>
    <property type="match status" value="1"/>
</dbReference>
<dbReference type="Pfam" id="PF04055">
    <property type="entry name" value="Radical_SAM"/>
    <property type="match status" value="1"/>
</dbReference>
<dbReference type="PIRSF" id="PIRSF004869">
    <property type="entry name" value="PflX_prd"/>
    <property type="match status" value="1"/>
</dbReference>
<dbReference type="SFLD" id="SFLDS00029">
    <property type="entry name" value="Radical_SAM"/>
    <property type="match status" value="1"/>
</dbReference>
<dbReference type="SFLD" id="SFLDG01101">
    <property type="entry name" value="Uncharacterised_Radical_SAM_Su"/>
    <property type="match status" value="1"/>
</dbReference>
<dbReference type="SUPFAM" id="SSF102114">
    <property type="entry name" value="Radical SAM enzymes"/>
    <property type="match status" value="1"/>
</dbReference>
<dbReference type="PROSITE" id="PS51918">
    <property type="entry name" value="RADICAL_SAM"/>
    <property type="match status" value="1"/>
</dbReference>
<accession>Q58218</accession>
<comment type="cofactor">
    <cofactor evidence="3">
        <name>[4Fe-4S] cluster</name>
        <dbReference type="ChEBI" id="CHEBI:49883"/>
    </cofactor>
    <text evidence="3">Binds 1 [4Fe-4S] cluster. The cluster is coordinated with 3 cysteines and an exchangeable S-adenosyl-L-methionine.</text>
</comment>
<protein>
    <recommendedName>
        <fullName>Uncharacterized protein MJ0808</fullName>
    </recommendedName>
</protein>
<gene>
    <name type="ordered locus">MJ0808</name>
</gene>
<feature type="chain" id="PRO_0000107057" description="Uncharacterized protein MJ0808">
    <location>
        <begin position="1"/>
        <end position="333"/>
    </location>
</feature>
<feature type="domain" description="Radical SAM core" evidence="2">
    <location>
        <begin position="67"/>
        <end position="274"/>
    </location>
</feature>
<feature type="binding site" evidence="1">
    <location>
        <position position="82"/>
    </location>
    <ligand>
        <name>[4Fe-4S] cluster</name>
        <dbReference type="ChEBI" id="CHEBI:49883"/>
        <note>4Fe-4S-S-AdoMet</note>
    </ligand>
</feature>
<feature type="binding site" evidence="1">
    <location>
        <position position="86"/>
    </location>
    <ligand>
        <name>[4Fe-4S] cluster</name>
        <dbReference type="ChEBI" id="CHEBI:49883"/>
        <note>4Fe-4S-S-AdoMet</note>
    </ligand>
</feature>
<feature type="binding site" evidence="1">
    <location>
        <position position="89"/>
    </location>
    <ligand>
        <name>[4Fe-4S] cluster</name>
        <dbReference type="ChEBI" id="CHEBI:49883"/>
        <note>4Fe-4S-S-AdoMet</note>
    </ligand>
</feature>
<proteinExistence type="predicted"/>
<reference key="1">
    <citation type="journal article" date="1996" name="Science">
        <title>Complete genome sequence of the methanogenic archaeon, Methanococcus jannaschii.</title>
        <authorList>
            <person name="Bult C.J."/>
            <person name="White O."/>
            <person name="Olsen G.J."/>
            <person name="Zhou L."/>
            <person name="Fleischmann R.D."/>
            <person name="Sutton G.G."/>
            <person name="Blake J.A."/>
            <person name="FitzGerald L.M."/>
            <person name="Clayton R.A."/>
            <person name="Gocayne J.D."/>
            <person name="Kerlavage A.R."/>
            <person name="Dougherty B.A."/>
            <person name="Tomb J.-F."/>
            <person name="Adams M.D."/>
            <person name="Reich C.I."/>
            <person name="Overbeek R."/>
            <person name="Kirkness E.F."/>
            <person name="Weinstock K.G."/>
            <person name="Merrick J.M."/>
            <person name="Glodek A."/>
            <person name="Scott J.L."/>
            <person name="Geoghagen N.S.M."/>
            <person name="Weidman J.F."/>
            <person name="Fuhrmann J.L."/>
            <person name="Nguyen D."/>
            <person name="Utterback T.R."/>
            <person name="Kelley J.M."/>
            <person name="Peterson J.D."/>
            <person name="Sadow P.W."/>
            <person name="Hanna M.C."/>
            <person name="Cotton M.D."/>
            <person name="Roberts K.M."/>
            <person name="Hurst M.A."/>
            <person name="Kaine B.P."/>
            <person name="Borodovsky M."/>
            <person name="Klenk H.-P."/>
            <person name="Fraser C.M."/>
            <person name="Smith H.O."/>
            <person name="Woese C.R."/>
            <person name="Venter J.C."/>
        </authorList>
    </citation>
    <scope>NUCLEOTIDE SEQUENCE [LARGE SCALE GENOMIC DNA]</scope>
    <source>
        <strain>ATCC 43067 / DSM 2661 / JAL-1 / JCM 10045 / NBRC 100440</strain>
    </source>
</reference>
<organism>
    <name type="scientific">Methanocaldococcus jannaschii (strain ATCC 43067 / DSM 2661 / JAL-1 / JCM 10045 / NBRC 100440)</name>
    <name type="common">Methanococcus jannaschii</name>
    <dbReference type="NCBI Taxonomy" id="243232"/>
    <lineage>
        <taxon>Archaea</taxon>
        <taxon>Methanobacteriati</taxon>
        <taxon>Methanobacteriota</taxon>
        <taxon>Methanomada group</taxon>
        <taxon>Methanococci</taxon>
        <taxon>Methanococcales</taxon>
        <taxon>Methanocaldococcaceae</taxon>
        <taxon>Methanocaldococcus</taxon>
    </lineage>
</organism>
<keyword id="KW-0004">4Fe-4S</keyword>
<keyword id="KW-0408">Iron</keyword>
<keyword id="KW-0411">Iron-sulfur</keyword>
<keyword id="KW-0479">Metal-binding</keyword>
<keyword id="KW-1185">Reference proteome</keyword>
<keyword id="KW-0949">S-adenosyl-L-methionine</keyword>
<name>Y808_METJA</name>
<evidence type="ECO:0000255" key="1"/>
<evidence type="ECO:0000255" key="2">
    <source>
        <dbReference type="PROSITE-ProRule" id="PRU01266"/>
    </source>
</evidence>
<evidence type="ECO:0000305" key="3"/>
<sequence>MREAMFYEKLDDNKVRCHICPRHCIIKEGERGFCWNRENINGVLYAVGYGKVCSLAIDPIEKKPLFHFYPTTQVVSLAIGGCNFRCLHCQNWTISQFPPDEIPYREMTPEEIVEVAIRYNCPGISYTYTEPTVYYEFMYDTSVIARENGMFNVMITNGYIEKEPLKALPVDAMNIDIKGNADFYKKVCKATLEPVLETCKLAKKLGIWVEVTNLIVPNYNDNIDDLLFIIHFVRDELGRETPLHFSRFHPDYKLTDVPPTPIETLEMARNLAIEEGLKYVYIGNVPGHEGENTYCPNCGALLIERYIFNAKIINLDVETKRCKICGEKIDIVL</sequence>